<name>RL13_LEGPC</name>
<protein>
    <recommendedName>
        <fullName evidence="1">Large ribosomal subunit protein uL13</fullName>
    </recommendedName>
    <alternativeName>
        <fullName evidence="2">50S ribosomal protein L13</fullName>
    </alternativeName>
</protein>
<evidence type="ECO:0000255" key="1">
    <source>
        <dbReference type="HAMAP-Rule" id="MF_01366"/>
    </source>
</evidence>
<evidence type="ECO:0000305" key="2"/>
<feature type="chain" id="PRO_1000055401" description="Large ribosomal subunit protein uL13">
    <location>
        <begin position="1"/>
        <end position="144"/>
    </location>
</feature>
<accession>A5IAL7</accession>
<sequence>MKTFSAKGNEVKRDWFVVDASEKVLGRLATEIARRLRGKHKAEYTPHVDTGDYIIVTNAEKVVVTGRKFKNKMYHHHTGFPGGIKSASFEKLQDKNPTKIIELAVKGMLPKNPLGREMYRKLKVYAGSEHPHTAQQPKQLEIEE</sequence>
<proteinExistence type="inferred from homology"/>
<gene>
    <name evidence="1" type="primary">rplM</name>
    <name type="ordered locus">LPC_0428</name>
</gene>
<dbReference type="EMBL" id="CP000675">
    <property type="protein sequence ID" value="ABQ54417.1"/>
    <property type="molecule type" value="Genomic_DNA"/>
</dbReference>
<dbReference type="RefSeq" id="WP_011947614.1">
    <property type="nucleotide sequence ID" value="NZ_JAPMSS010000010.1"/>
</dbReference>
<dbReference type="SMR" id="A5IAL7"/>
<dbReference type="KEGG" id="lpc:LPC_0428"/>
<dbReference type="HOGENOM" id="CLU_082184_2_2_6"/>
<dbReference type="GO" id="GO:0022625">
    <property type="term" value="C:cytosolic large ribosomal subunit"/>
    <property type="evidence" value="ECO:0007669"/>
    <property type="project" value="TreeGrafter"/>
</dbReference>
<dbReference type="GO" id="GO:0003729">
    <property type="term" value="F:mRNA binding"/>
    <property type="evidence" value="ECO:0007669"/>
    <property type="project" value="TreeGrafter"/>
</dbReference>
<dbReference type="GO" id="GO:0003735">
    <property type="term" value="F:structural constituent of ribosome"/>
    <property type="evidence" value="ECO:0007669"/>
    <property type="project" value="InterPro"/>
</dbReference>
<dbReference type="GO" id="GO:0017148">
    <property type="term" value="P:negative regulation of translation"/>
    <property type="evidence" value="ECO:0007669"/>
    <property type="project" value="TreeGrafter"/>
</dbReference>
<dbReference type="GO" id="GO:0006412">
    <property type="term" value="P:translation"/>
    <property type="evidence" value="ECO:0007669"/>
    <property type="project" value="UniProtKB-UniRule"/>
</dbReference>
<dbReference type="CDD" id="cd00392">
    <property type="entry name" value="Ribosomal_L13"/>
    <property type="match status" value="1"/>
</dbReference>
<dbReference type="FunFam" id="3.90.1180.10:FF:000001">
    <property type="entry name" value="50S ribosomal protein L13"/>
    <property type="match status" value="1"/>
</dbReference>
<dbReference type="Gene3D" id="3.90.1180.10">
    <property type="entry name" value="Ribosomal protein L13"/>
    <property type="match status" value="1"/>
</dbReference>
<dbReference type="HAMAP" id="MF_01366">
    <property type="entry name" value="Ribosomal_uL13"/>
    <property type="match status" value="1"/>
</dbReference>
<dbReference type="InterPro" id="IPR005822">
    <property type="entry name" value="Ribosomal_uL13"/>
</dbReference>
<dbReference type="InterPro" id="IPR005823">
    <property type="entry name" value="Ribosomal_uL13_bac-type"/>
</dbReference>
<dbReference type="InterPro" id="IPR023563">
    <property type="entry name" value="Ribosomal_uL13_CS"/>
</dbReference>
<dbReference type="InterPro" id="IPR036899">
    <property type="entry name" value="Ribosomal_uL13_sf"/>
</dbReference>
<dbReference type="NCBIfam" id="TIGR01066">
    <property type="entry name" value="rplM_bact"/>
    <property type="match status" value="1"/>
</dbReference>
<dbReference type="PANTHER" id="PTHR11545:SF2">
    <property type="entry name" value="LARGE RIBOSOMAL SUBUNIT PROTEIN UL13M"/>
    <property type="match status" value="1"/>
</dbReference>
<dbReference type="PANTHER" id="PTHR11545">
    <property type="entry name" value="RIBOSOMAL PROTEIN L13"/>
    <property type="match status" value="1"/>
</dbReference>
<dbReference type="Pfam" id="PF00572">
    <property type="entry name" value="Ribosomal_L13"/>
    <property type="match status" value="1"/>
</dbReference>
<dbReference type="PIRSF" id="PIRSF002181">
    <property type="entry name" value="Ribosomal_L13"/>
    <property type="match status" value="1"/>
</dbReference>
<dbReference type="SUPFAM" id="SSF52161">
    <property type="entry name" value="Ribosomal protein L13"/>
    <property type="match status" value="1"/>
</dbReference>
<dbReference type="PROSITE" id="PS00783">
    <property type="entry name" value="RIBOSOMAL_L13"/>
    <property type="match status" value="1"/>
</dbReference>
<comment type="function">
    <text evidence="1">This protein is one of the early assembly proteins of the 50S ribosomal subunit, although it is not seen to bind rRNA by itself. It is important during the early stages of 50S assembly.</text>
</comment>
<comment type="subunit">
    <text evidence="1">Part of the 50S ribosomal subunit.</text>
</comment>
<comment type="similarity">
    <text evidence="1">Belongs to the universal ribosomal protein uL13 family.</text>
</comment>
<keyword id="KW-0687">Ribonucleoprotein</keyword>
<keyword id="KW-0689">Ribosomal protein</keyword>
<reference key="1">
    <citation type="submission" date="2006-11" db="EMBL/GenBank/DDBJ databases">
        <title>Identification and characterization of a new conjugation/ type IVA secretion system (trb/tra) of L. pneumophila Corby localized on a mobile genomic island.</title>
        <authorList>
            <person name="Gloeckner G."/>
            <person name="Albert-Weissenberger C."/>
            <person name="Weinmann E."/>
            <person name="Jacobi S."/>
            <person name="Schunder E."/>
            <person name="Steinert M."/>
            <person name="Buchrieser C."/>
            <person name="Hacker J."/>
            <person name="Heuner K."/>
        </authorList>
    </citation>
    <scope>NUCLEOTIDE SEQUENCE [LARGE SCALE GENOMIC DNA]</scope>
    <source>
        <strain>Corby</strain>
    </source>
</reference>
<organism>
    <name type="scientific">Legionella pneumophila (strain Corby)</name>
    <dbReference type="NCBI Taxonomy" id="400673"/>
    <lineage>
        <taxon>Bacteria</taxon>
        <taxon>Pseudomonadati</taxon>
        <taxon>Pseudomonadota</taxon>
        <taxon>Gammaproteobacteria</taxon>
        <taxon>Legionellales</taxon>
        <taxon>Legionellaceae</taxon>
        <taxon>Legionella</taxon>
    </lineage>
</organism>